<dbReference type="EC" id="1.21.1.1" evidence="2 3"/>
<dbReference type="EMBL" id="CP002691">
    <property type="protein sequence ID" value="AEE50175.1"/>
    <property type="molecule type" value="Genomic_DNA"/>
</dbReference>
<dbReference type="RefSeq" id="WP_013764725.1">
    <property type="nucleotide sequence ID" value="NC_015510.1"/>
</dbReference>
<dbReference type="PDB" id="5KO7">
    <property type="method" value="X-ray"/>
    <property type="resolution" value="2.25 A"/>
    <property type="chains" value="A/B=1-222"/>
</dbReference>
<dbReference type="PDB" id="5KO8">
    <property type="method" value="X-ray"/>
    <property type="resolution" value="2.15 A"/>
    <property type="chains" value="A/B=1-222"/>
</dbReference>
<dbReference type="PDB" id="5KRD">
    <property type="method" value="X-ray"/>
    <property type="resolution" value="2.10 A"/>
    <property type="chains" value="A/B=1-222"/>
</dbReference>
<dbReference type="PDBsum" id="5KO7"/>
<dbReference type="PDBsum" id="5KO8"/>
<dbReference type="PDBsum" id="5KRD"/>
<dbReference type="SMR" id="F4KU78"/>
<dbReference type="STRING" id="760192.Halhy_2296"/>
<dbReference type="BindingDB" id="F4KU78"/>
<dbReference type="KEGG" id="hhy:Halhy_2296"/>
<dbReference type="eggNOG" id="COG0778">
    <property type="taxonomic scope" value="Bacteria"/>
</dbReference>
<dbReference type="HOGENOM" id="CLU_070764_1_0_10"/>
<dbReference type="OrthoDB" id="9809288at2"/>
<dbReference type="BRENDA" id="1.21.1.1">
    <property type="organism ID" value="2681"/>
</dbReference>
<dbReference type="SABIO-RK" id="F4KU78"/>
<dbReference type="Proteomes" id="UP000008461">
    <property type="component" value="Chromosome"/>
</dbReference>
<dbReference type="GO" id="GO:0010181">
    <property type="term" value="F:FMN binding"/>
    <property type="evidence" value="ECO:0000314"/>
    <property type="project" value="UniProtKB"/>
</dbReference>
<dbReference type="GO" id="GO:0140616">
    <property type="term" value="F:iodotyrosine deiodinase activity"/>
    <property type="evidence" value="ECO:0000314"/>
    <property type="project" value="UniProtKB"/>
</dbReference>
<dbReference type="CDD" id="cd02144">
    <property type="entry name" value="iodotyrosine_dehalogenase"/>
    <property type="match status" value="1"/>
</dbReference>
<dbReference type="Gene3D" id="3.40.109.10">
    <property type="entry name" value="NADH Oxidase"/>
    <property type="match status" value="1"/>
</dbReference>
<dbReference type="InterPro" id="IPR029479">
    <property type="entry name" value="Nitroreductase"/>
</dbReference>
<dbReference type="InterPro" id="IPR000415">
    <property type="entry name" value="Nitroreductase-like"/>
</dbReference>
<dbReference type="InterPro" id="IPR050627">
    <property type="entry name" value="Nitroreductase/BluB"/>
</dbReference>
<dbReference type="PANTHER" id="PTHR23026:SF90">
    <property type="entry name" value="IODOTYROSINE DEIODINASE 1"/>
    <property type="match status" value="1"/>
</dbReference>
<dbReference type="PANTHER" id="PTHR23026">
    <property type="entry name" value="NADPH NITROREDUCTASE"/>
    <property type="match status" value="1"/>
</dbReference>
<dbReference type="Pfam" id="PF00881">
    <property type="entry name" value="Nitroreductase"/>
    <property type="match status" value="1"/>
</dbReference>
<dbReference type="SUPFAM" id="SSF55469">
    <property type="entry name" value="FMN-dependent nitroreductase-like"/>
    <property type="match status" value="1"/>
</dbReference>
<accession>F4KU78</accession>
<protein>
    <recommendedName>
        <fullName evidence="4">Iodotyrosine deiodinase</fullName>
        <ecNumber evidence="2 3">1.21.1.1</ecNumber>
    </recommendedName>
    <alternativeName>
        <fullName evidence="8">Halotyrosine dehalogenase</fullName>
    </alternativeName>
</protein>
<feature type="chain" id="PRO_0000455638" description="Iodotyrosine deiodinase">
    <location>
        <begin position="1"/>
        <end position="222"/>
    </location>
</feature>
<feature type="binding site" evidence="3 11 12 13">
    <location>
        <begin position="34"/>
        <end position="38"/>
    </location>
    <ligand>
        <name>FMN</name>
        <dbReference type="ChEBI" id="CHEBI:58210"/>
    </ligand>
</feature>
<feature type="binding site" evidence="3 12 13">
    <location>
        <begin position="61"/>
        <end position="62"/>
    </location>
    <ligand>
        <name>FMN</name>
        <dbReference type="ChEBI" id="CHEBI:58210"/>
    </ligand>
</feature>
<feature type="binding site" evidence="3 12">
    <location>
        <position position="91"/>
    </location>
    <ligand>
        <name>3-iodo-L-tyrosine</name>
        <dbReference type="ChEBI" id="CHEBI:59898"/>
    </ligand>
</feature>
<feature type="binding site" evidence="3 12">
    <location>
        <position position="95"/>
    </location>
    <ligand>
        <name>3-iodo-L-tyrosine</name>
        <dbReference type="ChEBI" id="CHEBI:59898"/>
    </ligand>
</feature>
<feature type="binding site" evidence="3 12">
    <location>
        <position position="116"/>
    </location>
    <ligand>
        <name>3-iodo-L-tyrosine</name>
        <dbReference type="ChEBI" id="CHEBI:59898"/>
    </ligand>
</feature>
<feature type="binding site" evidence="3 11 12 13">
    <location>
        <begin position="171"/>
        <end position="173"/>
    </location>
    <ligand>
        <name>FMN</name>
        <dbReference type="ChEBI" id="CHEBI:58210"/>
    </ligand>
</feature>
<feature type="binding site" evidence="3 11 12 13">
    <location>
        <position position="212"/>
    </location>
    <ligand>
        <name>FMN</name>
        <dbReference type="ChEBI" id="CHEBI:58210"/>
    </ligand>
</feature>
<feature type="strand" evidence="14">
    <location>
        <begin position="7"/>
        <end position="9"/>
    </location>
</feature>
<feature type="helix" evidence="16">
    <location>
        <begin position="17"/>
        <end position="32"/>
    </location>
</feature>
<feature type="helix" evidence="16">
    <location>
        <begin position="47"/>
        <end position="57"/>
    </location>
</feature>
<feature type="helix" evidence="16">
    <location>
        <begin position="63"/>
        <end position="65"/>
    </location>
</feature>
<feature type="strand" evidence="16">
    <location>
        <begin position="69"/>
        <end position="74"/>
    </location>
</feature>
<feature type="helix" evidence="16">
    <location>
        <begin position="77"/>
        <end position="93"/>
    </location>
</feature>
<feature type="helix" evidence="15">
    <location>
        <begin position="102"/>
        <end position="107"/>
    </location>
</feature>
<feature type="helix" evidence="15">
    <location>
        <begin position="108"/>
        <end position="110"/>
    </location>
</feature>
<feature type="helix" evidence="16">
    <location>
        <begin position="118"/>
        <end position="121"/>
    </location>
</feature>
<feature type="strand" evidence="16">
    <location>
        <begin position="122"/>
        <end position="135"/>
    </location>
</feature>
<feature type="strand" evidence="16">
    <location>
        <begin position="141"/>
        <end position="143"/>
    </location>
</feature>
<feature type="helix" evidence="16">
    <location>
        <begin position="147"/>
        <end position="165"/>
    </location>
</feature>
<feature type="helix" evidence="16">
    <location>
        <begin position="177"/>
        <end position="183"/>
    </location>
</feature>
<feature type="strand" evidence="16">
    <location>
        <begin position="190"/>
        <end position="199"/>
    </location>
</feature>
<feature type="strand" evidence="14">
    <location>
        <begin position="206"/>
        <end position="208"/>
    </location>
</feature>
<feature type="helix" evidence="16">
    <location>
        <begin position="215"/>
        <end position="218"/>
    </location>
</feature>
<feature type="strand" evidence="14">
    <location>
        <begin position="219"/>
        <end position="222"/>
    </location>
</feature>
<reference evidence="10" key="1">
    <citation type="journal article" date="2011" name="Stand. Genomic Sci.">
        <title>Complete genome sequence of Haliscomenobacter hydrossis type strain (O).</title>
        <authorList>
            <consortium name="US DOE Joint Genome Institute (JGI-PGF)"/>
            <person name="Daligault H."/>
            <person name="Lapidus A."/>
            <person name="Zeytun A."/>
            <person name="Nolan M."/>
            <person name="Lucas S."/>
            <person name="Del Rio T.G."/>
            <person name="Tice H."/>
            <person name="Cheng J.F."/>
            <person name="Tapia R."/>
            <person name="Han C."/>
            <person name="Goodwin L."/>
            <person name="Pitluck S."/>
            <person name="Liolios K."/>
            <person name="Pagani I."/>
            <person name="Ivanova N."/>
            <person name="Huntemann M."/>
            <person name="Mavromatis K."/>
            <person name="Mikhailova N."/>
            <person name="Pati A."/>
            <person name="Chen A."/>
            <person name="Palaniappan K."/>
            <person name="Land M."/>
            <person name="Hauser L."/>
            <person name="Brambilla E.M."/>
            <person name="Rohde M."/>
            <person name="Verbarg S."/>
            <person name="Goker M."/>
            <person name="Bristow J."/>
            <person name="Eisen J.A."/>
            <person name="Markowitz V."/>
            <person name="Hugenholtz P."/>
            <person name="Kyrpides N.C."/>
            <person name="Klenk H.P."/>
            <person name="Woyke T."/>
        </authorList>
    </citation>
    <scope>NUCLEOTIDE SEQUENCE [LARGE SCALE GENOMIC DNA]</scope>
    <source>
        <strain evidence="10">ATCC 27775 / DSM 1100 / LMG 10767 / O</strain>
    </source>
</reference>
<reference evidence="10" key="2">
    <citation type="submission" date="2011-04" db="EMBL/GenBank/DDBJ databases">
        <title>Complete sequence of chromosome of Haliscomenobacter hydrossis DSM 1100.</title>
        <authorList>
            <consortium name="US DOE Joint Genome Institute (JGI-PGF)"/>
            <person name="Lucas S."/>
            <person name="Han J."/>
            <person name="Lapidus A."/>
            <person name="Bruce D."/>
            <person name="Goodwin L."/>
            <person name="Pitluck S."/>
            <person name="Peters L."/>
            <person name="Kyrpides N."/>
            <person name="Mavromatis K."/>
            <person name="Ivanova N."/>
            <person name="Ovchinnikova G."/>
            <person name="Pagani I."/>
            <person name="Daligault H."/>
            <person name="Detter J.C."/>
            <person name="Han C."/>
            <person name="Land M."/>
            <person name="Hauser L."/>
            <person name="Markowitz V."/>
            <person name="Cheng J.-F."/>
            <person name="Hugenholtz P."/>
            <person name="Woyke T."/>
            <person name="Wu D."/>
            <person name="Verbarg S."/>
            <person name="Frueling A."/>
            <person name="Brambilla E."/>
            <person name="Klenk H.-P."/>
            <person name="Eisen J.A."/>
        </authorList>
    </citation>
    <scope>NUCLEOTIDE SEQUENCE [LARGE SCALE GENOMIC DNA]</scope>
    <source>
        <strain evidence="6">ATCC 27775 / DSM 1100 / LMG 10767 / O</strain>
    </source>
</reference>
<reference evidence="7" key="3">
    <citation type="journal article" date="2014" name="Mol. Biosyst.">
        <title>Iodotyrosine deiodinase: a unique flavoprotein present in organisms of diverse phyla.</title>
        <authorList>
            <person name="Phatarphekar A."/>
            <person name="Buss J.M."/>
            <person name="Rokita S.E."/>
        </authorList>
    </citation>
    <scope>FUNCTION</scope>
    <scope>CATALYTIC ACTIVITY</scope>
    <scope>BIOPHYSICOCHEMICAL PROPERTIES</scope>
    <scope>COFACTOR</scope>
    <source>
        <strain evidence="4">ATCC 27775 / DSM 1100 / LMG 10767 / O</strain>
    </source>
</reference>
<reference evidence="11 12 13" key="4">
    <citation type="journal article" date="2017" name="Biochemistry">
        <title>Active Site Binding Is Not Sufficient for Reductive Deiodination by Iodotyrosine Deiodinase.</title>
        <authorList>
            <person name="Ingavat N."/>
            <person name="Kavran J.M."/>
            <person name="Sun Z."/>
            <person name="Rokita S.E."/>
        </authorList>
    </citation>
    <scope>X-RAY CRYSTALLOGRAPHY (2.10 ANGSTROMS) IN COMPLEX WITH FMN AND 3-IODO-L-TYROSINE</scope>
    <scope>FUNCTION</scope>
    <scope>CATALYTIC ACTIVITY</scope>
    <scope>BIOPHYSICOCHEMICAL PROPERTIES</scope>
    <scope>COFACTOR</scope>
    <scope>SUBUNIT</scope>
    <source>
        <strain evidence="5">ATCC 27775 / DSM 1100 / LMG 10767 / O</strain>
    </source>
</reference>
<keyword id="KW-0002">3D-structure</keyword>
<keyword id="KW-0285">Flavoprotein</keyword>
<keyword id="KW-0288">FMN</keyword>
<keyword id="KW-0521">NADP</keyword>
<keyword id="KW-0547">Nucleotide-binding</keyword>
<keyword id="KW-0560">Oxidoreductase</keyword>
<keyword id="KW-1185">Reference proteome</keyword>
<gene>
    <name evidence="4" type="primary">IYD</name>
    <name evidence="9" type="ordered locus">Halhy_2296</name>
</gene>
<organism evidence="10">
    <name type="scientific">Haliscomenobacter hydrossis (strain ATCC 27775 / DSM 1100 / LMG 10767 / O)</name>
    <dbReference type="NCBI Taxonomy" id="760192"/>
    <lineage>
        <taxon>Bacteria</taxon>
        <taxon>Pseudomonadati</taxon>
        <taxon>Bacteroidota</taxon>
        <taxon>Saprospiria</taxon>
        <taxon>Saprospirales</taxon>
        <taxon>Haliscomenobacteraceae</taxon>
        <taxon>Haliscomenobacter</taxon>
    </lineage>
</organism>
<proteinExistence type="evidence at protein level"/>
<sequence>MKQKPAFIPYAGAQFEPEEMLSKSAEYYQFMDHRRTVREFSNRAIPLEVIENIVMTASTAPSGAHKQPWTFVVVSDPQIKAKIRQAAEKEEFESYNGRMSNEWLEDLQPFGTDWHKPFLEIAPYLIVVFRKAYDVLPDGTQRKNYYVQESVGIACGFLLAAIHQAGLVALTHTPSPMNFLQKILQRPENERPFLLVPVGYPAEGAMVPDLQRKDKAAVMVVY</sequence>
<evidence type="ECO:0000250" key="1">
    <source>
        <dbReference type="UniProtKB" id="B9K712"/>
    </source>
</evidence>
<evidence type="ECO:0000269" key="2">
    <source>
    </source>
</evidence>
<evidence type="ECO:0000269" key="3">
    <source>
    </source>
</evidence>
<evidence type="ECO:0000303" key="4">
    <source>
    </source>
</evidence>
<evidence type="ECO:0000303" key="5">
    <source>
    </source>
</evidence>
<evidence type="ECO:0000303" key="6">
    <source ref="2"/>
</evidence>
<evidence type="ECO:0000305" key="7"/>
<evidence type="ECO:0000305" key="8">
    <source>
    </source>
</evidence>
<evidence type="ECO:0000312" key="9">
    <source>
        <dbReference type="EMBL" id="AEE50175.1"/>
    </source>
</evidence>
<evidence type="ECO:0000312" key="10">
    <source>
        <dbReference type="Proteomes" id="UP000008461"/>
    </source>
</evidence>
<evidence type="ECO:0007744" key="11">
    <source>
        <dbReference type="PDB" id="5KO7"/>
    </source>
</evidence>
<evidence type="ECO:0007744" key="12">
    <source>
        <dbReference type="PDB" id="5KO8"/>
    </source>
</evidence>
<evidence type="ECO:0007744" key="13">
    <source>
        <dbReference type="PDB" id="5KRD"/>
    </source>
</evidence>
<evidence type="ECO:0007829" key="14">
    <source>
        <dbReference type="PDB" id="5KO7"/>
    </source>
</evidence>
<evidence type="ECO:0007829" key="15">
    <source>
        <dbReference type="PDB" id="5KO8"/>
    </source>
</evidence>
<evidence type="ECO:0007829" key="16">
    <source>
        <dbReference type="PDB" id="5KRD"/>
    </source>
</evidence>
<comment type="function">
    <text evidence="1 2 3">Catalyzes the dehalogenation of halotyrosines such as 3-iodo-L-tyrosine and 3,5-diiodo-L-tyrosine (PubMed:24153409, PubMed:28157283). Likely to also catalyze the dehalogenation of other halotyrosines such as 3-bromo-L-tyrosine, 3-chloro-L-tyrosine and 3-iodo-L-tyrosine (By similarity). Activity towards 3-iodo-L-tyrosine is much stronger than activity towards 3,5-diiodo-L-tyrosine and 2-iodophenol (PubMed:24153409, PubMed:28157283).</text>
</comment>
<comment type="catalytic activity">
    <reaction evidence="2 3">
        <text>2 iodide + L-tyrosine + 2 NADP(+) = 3,5-diiodo-L-tyrosine + 2 NADPH + H(+)</text>
        <dbReference type="Rhea" id="RHEA:32479"/>
        <dbReference type="ChEBI" id="CHEBI:15378"/>
        <dbReference type="ChEBI" id="CHEBI:16382"/>
        <dbReference type="ChEBI" id="CHEBI:57506"/>
        <dbReference type="ChEBI" id="CHEBI:57783"/>
        <dbReference type="ChEBI" id="CHEBI:58315"/>
        <dbReference type="ChEBI" id="CHEBI:58349"/>
        <dbReference type="EC" id="1.21.1.1"/>
    </reaction>
    <physiologicalReaction direction="right-to-left" evidence="2 3">
        <dbReference type="Rhea" id="RHEA:32481"/>
    </physiologicalReaction>
</comment>
<comment type="catalytic activity">
    <reaction evidence="3">
        <text>iodide + L-tyrosine + NADP(+) = 3-iodo-L-tyrosine + NADPH</text>
        <dbReference type="Rhea" id="RHEA:27453"/>
        <dbReference type="ChEBI" id="CHEBI:16382"/>
        <dbReference type="ChEBI" id="CHEBI:57783"/>
        <dbReference type="ChEBI" id="CHEBI:58315"/>
        <dbReference type="ChEBI" id="CHEBI:58349"/>
        <dbReference type="ChEBI" id="CHEBI:59898"/>
    </reaction>
    <physiologicalReaction direction="right-to-left" evidence="3">
        <dbReference type="Rhea" id="RHEA:27455"/>
    </physiologicalReaction>
</comment>
<comment type="catalytic activity">
    <reaction evidence="2 3">
        <text>3-iodo-L-tyrosine + iodide + NADP(+) = 3,5-diiodo-L-tyrosine + NADPH + H(+)</text>
        <dbReference type="Rhea" id="RHEA:27457"/>
        <dbReference type="ChEBI" id="CHEBI:15378"/>
        <dbReference type="ChEBI" id="CHEBI:16382"/>
        <dbReference type="ChEBI" id="CHEBI:57506"/>
        <dbReference type="ChEBI" id="CHEBI:57783"/>
        <dbReference type="ChEBI" id="CHEBI:58349"/>
        <dbReference type="ChEBI" id="CHEBI:59898"/>
    </reaction>
    <physiologicalReaction direction="right-to-left" evidence="2 3">
        <dbReference type="Rhea" id="RHEA:27459"/>
    </physiologicalReaction>
</comment>
<comment type="catalytic activity">
    <reaction evidence="1">
        <text>L-tyrosine + chloride + NADP(+) = 3-chloro-L-tyrosine + NADPH</text>
        <dbReference type="Rhea" id="RHEA:70343"/>
        <dbReference type="ChEBI" id="CHEBI:17996"/>
        <dbReference type="ChEBI" id="CHEBI:57783"/>
        <dbReference type="ChEBI" id="CHEBI:58315"/>
        <dbReference type="ChEBI" id="CHEBI:58349"/>
        <dbReference type="ChEBI" id="CHEBI:189422"/>
    </reaction>
    <physiologicalReaction direction="right-to-left" evidence="1">
        <dbReference type="Rhea" id="RHEA:70345"/>
    </physiologicalReaction>
</comment>
<comment type="catalytic activity">
    <reaction evidence="1">
        <text>bromide + L-tyrosine + NADP(+) = 3-bromo-L-tyrosine + NADPH</text>
        <dbReference type="Rhea" id="RHEA:70347"/>
        <dbReference type="ChEBI" id="CHEBI:15858"/>
        <dbReference type="ChEBI" id="CHEBI:57783"/>
        <dbReference type="ChEBI" id="CHEBI:58315"/>
        <dbReference type="ChEBI" id="CHEBI:58349"/>
        <dbReference type="ChEBI" id="CHEBI:189423"/>
    </reaction>
    <physiologicalReaction direction="right-to-left" evidence="1">
        <dbReference type="Rhea" id="RHEA:70349"/>
    </physiologicalReaction>
</comment>
<comment type="cofactor">
    <cofactor evidence="2 3">
        <name>FMN</name>
        <dbReference type="ChEBI" id="CHEBI:58210"/>
    </cofactor>
</comment>
<comment type="biophysicochemical properties">
    <kinetics>
        <KM evidence="2">6.6 uM for 3,5-diiodo-L-tyrosine</KM>
        <KM evidence="3">0.012 mM for 3-iodo-L-tyrosine (at pH 7.4 and 25 degrees Celsius)</KM>
        <KM evidence="3">4.1 mM for 2-iodophenol (at pH 7.4 and 25 degrees Celsius)</KM>
        <text evidence="2 3">kcat 0.09 sec(-1) for the deiodination of 3,5-diiodo-L-tyrosine (PubMed:24153409). kcat is 0.27 sec(-1) for the dehalogenation of 3-iodo-L-tyrosine (at pH 7.4 and 25 degrees Celsius) (PubMed:28157283). kcat is 0.0029 sec(-1) for the dehalogenation of 2-iodophenol (at pH 7.4 and 25 degrees Celsius) (PubMed:28157283).</text>
    </kinetics>
</comment>
<comment type="subunit">
    <text evidence="3">Homodimer.</text>
</comment>
<comment type="similarity">
    <text evidence="7">Belongs to the nitroreductase family.</text>
</comment>
<name>IYD_HALH1</name>